<organism>
    <name type="scientific">Oryctolagus cuniculus</name>
    <name type="common">Rabbit</name>
    <dbReference type="NCBI Taxonomy" id="9986"/>
    <lineage>
        <taxon>Eukaryota</taxon>
        <taxon>Metazoa</taxon>
        <taxon>Chordata</taxon>
        <taxon>Craniata</taxon>
        <taxon>Vertebrata</taxon>
        <taxon>Euteleostomi</taxon>
        <taxon>Mammalia</taxon>
        <taxon>Eutheria</taxon>
        <taxon>Euarchontoglires</taxon>
        <taxon>Glires</taxon>
        <taxon>Lagomorpha</taxon>
        <taxon>Leporidae</taxon>
        <taxon>Oryctolagus</taxon>
    </lineage>
</organism>
<reference key="1">
    <citation type="journal article" date="2001" name="Biol. Reprod.">
        <title>Zonadhesin: characterization, localization, and zona pellucida binding.</title>
        <authorList>
            <person name="Lea I.A."/>
            <person name="Sivashanmugam P."/>
            <person name="O'Rand M.G."/>
        </authorList>
    </citation>
    <scope>NUCLEOTIDE SEQUENCE [MRNA]</scope>
    <source>
        <tissue>Testis</tissue>
    </source>
</reference>
<sequence length="2282" mass="248292">MFFATGRASAFSHPCGRTAVSLREERRIKKRKRQDGFYMLLDPKNAKPRQKSVLLSPLSQSAGCLTLSFHYTLWGQSPGAALSVLASVLGSIRKHTLFSGQPSPNWQPVSVNYSGPGQIQFTVVGVFGDVPEPAVAVDAISIAPCGESFPQCVFEDAAHPFCDWLQASEDGGRWAWTDKDMLAQERSLMRESPHTGHHYIYLEADKFSRPGQSVRLVSRPFCAPGDVCVEFSYHMYGLGEGTTLQFLLGSPAGSTPVSLWNRVGSQSPDWLNASVTIPSGHQQPMQLVFEAIRGSNTAFVVAMSFILINHGTCHVPVPPVIPIKTLVIPTEQPTVPAEGTTEPPEGTIELPEGTTKLPEETTELPEEITEPPKETTIPTEPPTVPTEPPTVPTEPPTVPTEKPTVLTEKPTVPTEETSIPTEPPTVPTEKPTVATEPPTVPTEEPTVATEKPTVPTEETTPPTTARSTLTSLEPTTHTPSTSLTSTTLSTTTTPSPTTVSCPANAHYESCACPASCKHPKASCKPPCQPGCVCDPGLVFSNNSCIKASSCPCLYNNNNYEPEAEWFSPNCTELCHCWPGGRIECQISQCKTHTKCQLKNGQYECQPYGTATCFVYGDPHYVTFDGRHFGFMGKCTYIVAQPCSKSTDSFFRVTAKNEERGQEGMSCLSRVDVTLSETVVTLLKGRRTLVGGQRVTLPAMPAKGVFLGPSGRFVELQTDFGLRVRWDGDQQLLVTVPSAYFQKLCGLCGNYDGHSSNDNLKADGQPAQSEEELGNSWQWAQDEDKECQKNQANPPSCDTALQTKMSGPQFCGQLVDSRGVFKTCLLHLKASSFFDNCVFDTCNFQGLQLMLCAHMSAVTAACQDAGYAVKPWREPQFCPLACPPNSRYSLCTSPCPKTCHTGYVGMPCPEQCLEGCECNPGFILSGLECVPSAQCGCLDPSRGYFKVGEQWFKSDCKQLCICEGSNQIRCQPWKCGPHEVCSQQSGIYGCHSQGSATCSASGDPHYLTFDGALHHFMGTCNYVLTQPCRHRPQENSFVVSATNEIRDGNLEVSLRPSCPRCRSSALKISLVKGHKVVLNGRRVALPVWPSRGQVTVRPSGNFMLLYTNFGLRVRYDGNHLVEVTVPSSYAGQLCGLCGNYNNNSLDDILGPYKRPVGNSVQLGAAWKLEEGSETGCFLQGGKPSSCHEDMGDTWNKNCEVLVNPLGPFSQCHKVVPPEVSFTSCVHGQCGTKGDSLTLCRSLQAYASLCSLAGQALAWRNSTFCPLKCPPNSSYSPCGSPCPGTCLSLNHPKDCPITLPCVEGCECQNGYILSGTSCVPLNQCGCTDFEGSYHLVRESWYTDNTCSRLCTCSLHNNITCRQTACKPGQQCWAVDGLLRCRDSGMGVCQVTGDSRYLSFDGSSHPLQGACTYVLAKVCHPNMDLPFFKVSASNEKSSAGGTNAVSLHQVYIEFSGSLVTLQKGNLVLINGTRVALPATSQIRGLNISSSRTHTIVSFWIGAQIKFDGNHVLKITIPAAYYEKVCGICGNYNGEPEDELMMPSDELAASDLEFVKSWKDNNIDPNCQKSQEGKGKPQEEQGPSGSSKKASCSPADLQKVQEQCQAALQTPAWAECASRVDLRPFLLDCMNSLCEFRGSLQPLCKALQALGAACRSKGLQPPIWRNSSFCPLACPAYSTYTNCLPSCSPSCFDPDGRCEGARAPSSCAEGCTCQPGYVLSKNKCVAKDQCSCRDAQGGSIPSGKSWVSSGCSQKCACTEGSIQCRAFHCPSRSHCKLNSNGNSNCVSEKSDQCSIFGGPHYRTFDRFSFGFRGRMTYVLIKTVDELPDGVERLLVQARNKMYPPWNKVFLQEIITTVYGYKVQLQRDLVLVVNNQKMAVPYKPEDRLRVSMQGQRLFLITDFEMVVSFDGRNAAVITLPSMYQGLVRGLCGNYDSDRRNEMMLPNGAITTNVDVFGNSWEVKTEDSVLRFRRALQVEADGKEKETGSYRSECSQEQLALVNSTQACRVLVDPQGPFAACHQTVAPEPFQEHCVSDLCASRDPKEHEELRCQVLSGYSITCQEAGIALAGWRDHTHCAMVCPANTVYQSCMTPCPESCANLAAPRDCEGPCVEGCASLPGYAFSGAQSLPLANCGCTSNGIYYQLGHSFVTADCSQRCTCASSGVLLCEPFSCRPGESCTLGNLTRGCFRESPCLRNPCQNDGRCREQGTSFTCECEPGYGGHLCTEPRDVLLPPKPDTSNLVAILLGMLVSLVVTVPVLARKCVSRKRRRWREKTQSEPRSAPGRR</sequence>
<evidence type="ECO:0000250" key="1"/>
<evidence type="ECO:0000250" key="2">
    <source>
        <dbReference type="UniProtKB" id="Q02817"/>
    </source>
</evidence>
<evidence type="ECO:0000255" key="3"/>
<evidence type="ECO:0000255" key="4">
    <source>
        <dbReference type="PROSITE-ProRule" id="PRU00076"/>
    </source>
</evidence>
<evidence type="ECO:0000255" key="5">
    <source>
        <dbReference type="PROSITE-ProRule" id="PRU00128"/>
    </source>
</evidence>
<evidence type="ECO:0000255" key="6">
    <source>
        <dbReference type="PROSITE-ProRule" id="PRU00580"/>
    </source>
</evidence>
<evidence type="ECO:0000256" key="7">
    <source>
        <dbReference type="SAM" id="MobiDB-lite"/>
    </source>
</evidence>
<comment type="function">
    <text evidence="1">Binds in a species-specific manner to the zona pellucida of the egg. May be involved in gamete recognition and/or signaling (By similarity).</text>
</comment>
<comment type="subunit">
    <text evidence="1">Probably forms covalent oligomers.</text>
</comment>
<comment type="subcellular location">
    <subcellularLocation>
        <location>Cell membrane</location>
        <topology>Single-pass type I membrane protein</topology>
    </subcellularLocation>
    <text evidence="1">Exclusively on the apical region of the sperm head.</text>
</comment>
<comment type="domain">
    <text>The MAM domains probably mediate sperm adhesion to the zona pellucida.</text>
</comment>
<comment type="domain">
    <text>During sperm migration through the reproductive tracts, the mucin-like domain might inhibit inappropriate trapping of spermatozoa or promoting adhesion to the oviductal isthmus.</text>
</comment>
<comment type="domain">
    <text evidence="2">The VWFD domains 2 and 3 may mediate covalent oligomerization (By similarity to human intestinal mucin MUC2).</text>
</comment>
<dbReference type="EMBL" id="AF244982">
    <property type="protein sequence ID" value="AAF63342.2"/>
    <property type="molecule type" value="mRNA"/>
</dbReference>
<dbReference type="RefSeq" id="NP_001075550.1">
    <property type="nucleotide sequence ID" value="NM_001082081.1"/>
</dbReference>
<dbReference type="SMR" id="P57999"/>
<dbReference type="STRING" id="9986.ENSOCUP00000004858"/>
<dbReference type="GlyCosmos" id="P57999">
    <property type="glycosylation" value="13 sites, No reported glycans"/>
</dbReference>
<dbReference type="PaxDb" id="9986-ENSOCUP00000025091"/>
<dbReference type="eggNOG" id="KOG1216">
    <property type="taxonomic scope" value="Eukaryota"/>
</dbReference>
<dbReference type="InParanoid" id="P57999"/>
<dbReference type="Proteomes" id="UP000001811">
    <property type="component" value="Unplaced"/>
</dbReference>
<dbReference type="GO" id="GO:0031012">
    <property type="term" value="C:extracellular matrix"/>
    <property type="evidence" value="ECO:0007669"/>
    <property type="project" value="TreeGrafter"/>
</dbReference>
<dbReference type="GO" id="GO:0005615">
    <property type="term" value="C:extracellular space"/>
    <property type="evidence" value="ECO:0007669"/>
    <property type="project" value="TreeGrafter"/>
</dbReference>
<dbReference type="GO" id="GO:0005886">
    <property type="term" value="C:plasma membrane"/>
    <property type="evidence" value="ECO:0007669"/>
    <property type="project" value="UniProtKB-SubCell"/>
</dbReference>
<dbReference type="GO" id="GO:0007155">
    <property type="term" value="P:cell adhesion"/>
    <property type="evidence" value="ECO:0007669"/>
    <property type="project" value="UniProtKB-KW"/>
</dbReference>
<dbReference type="CDD" id="cd00054">
    <property type="entry name" value="EGF_CA"/>
    <property type="match status" value="1"/>
</dbReference>
<dbReference type="CDD" id="cd06263">
    <property type="entry name" value="MAM"/>
    <property type="match status" value="2"/>
</dbReference>
<dbReference type="CDD" id="cd19941">
    <property type="entry name" value="TIL"/>
    <property type="match status" value="5"/>
</dbReference>
<dbReference type="FunFam" id="2.10.25.10:FF:000055">
    <property type="entry name" value="alpha-tectorin isoform X1"/>
    <property type="match status" value="4"/>
</dbReference>
<dbReference type="Gene3D" id="2.60.120.200">
    <property type="match status" value="2"/>
</dbReference>
<dbReference type="Gene3D" id="2.10.25.10">
    <property type="entry name" value="Laminin"/>
    <property type="match status" value="6"/>
</dbReference>
<dbReference type="InterPro" id="IPR013320">
    <property type="entry name" value="ConA-like_dom_sf"/>
</dbReference>
<dbReference type="InterPro" id="IPR000742">
    <property type="entry name" value="EGF-like_dom"/>
</dbReference>
<dbReference type="InterPro" id="IPR000998">
    <property type="entry name" value="MAM_dom"/>
</dbReference>
<dbReference type="InterPro" id="IPR050780">
    <property type="entry name" value="Mucin_vWF_Thrombospondin_sf"/>
</dbReference>
<dbReference type="InterPro" id="IPR036084">
    <property type="entry name" value="Ser_inhib-like_sf"/>
</dbReference>
<dbReference type="InterPro" id="IPR002919">
    <property type="entry name" value="TIL_dom"/>
</dbReference>
<dbReference type="InterPro" id="IPR025615">
    <property type="entry name" value="TILa_dom"/>
</dbReference>
<dbReference type="InterPro" id="IPR014853">
    <property type="entry name" value="VWF/SSPO/ZAN-like_Cys-rich_dom"/>
</dbReference>
<dbReference type="InterPro" id="IPR001007">
    <property type="entry name" value="VWF_dom"/>
</dbReference>
<dbReference type="InterPro" id="IPR001846">
    <property type="entry name" value="VWF_type-D"/>
</dbReference>
<dbReference type="PANTHER" id="PTHR11339">
    <property type="entry name" value="EXTRACELLULAR MATRIX GLYCOPROTEIN RELATED"/>
    <property type="match status" value="1"/>
</dbReference>
<dbReference type="PANTHER" id="PTHR11339:SF374">
    <property type="entry name" value="ZONADHESIN"/>
    <property type="match status" value="1"/>
</dbReference>
<dbReference type="Pfam" id="PF08742">
    <property type="entry name" value="C8"/>
    <property type="match status" value="4"/>
</dbReference>
<dbReference type="Pfam" id="PF00629">
    <property type="entry name" value="MAM"/>
    <property type="match status" value="2"/>
</dbReference>
<dbReference type="Pfam" id="PF01826">
    <property type="entry name" value="TIL"/>
    <property type="match status" value="5"/>
</dbReference>
<dbReference type="Pfam" id="PF12714">
    <property type="entry name" value="TILa"/>
    <property type="match status" value="5"/>
</dbReference>
<dbReference type="Pfam" id="PF00094">
    <property type="entry name" value="VWD"/>
    <property type="match status" value="4"/>
</dbReference>
<dbReference type="SMART" id="SM00832">
    <property type="entry name" value="C8"/>
    <property type="match status" value="4"/>
</dbReference>
<dbReference type="SMART" id="SM00181">
    <property type="entry name" value="EGF"/>
    <property type="match status" value="5"/>
</dbReference>
<dbReference type="SMART" id="SM00137">
    <property type="entry name" value="MAM"/>
    <property type="match status" value="1"/>
</dbReference>
<dbReference type="SMART" id="SM00214">
    <property type="entry name" value="VWC"/>
    <property type="match status" value="4"/>
</dbReference>
<dbReference type="SMART" id="SM00215">
    <property type="entry name" value="VWC_out"/>
    <property type="match status" value="4"/>
</dbReference>
<dbReference type="SMART" id="SM00216">
    <property type="entry name" value="VWD"/>
    <property type="match status" value="4"/>
</dbReference>
<dbReference type="SUPFAM" id="SSF49899">
    <property type="entry name" value="Concanavalin A-like lectins/glucanases"/>
    <property type="match status" value="2"/>
</dbReference>
<dbReference type="SUPFAM" id="SSF57196">
    <property type="entry name" value="EGF/Laminin"/>
    <property type="match status" value="1"/>
</dbReference>
<dbReference type="SUPFAM" id="SSF57567">
    <property type="entry name" value="Serine protease inhibitors"/>
    <property type="match status" value="5"/>
</dbReference>
<dbReference type="PROSITE" id="PS00022">
    <property type="entry name" value="EGF_1"/>
    <property type="match status" value="1"/>
</dbReference>
<dbReference type="PROSITE" id="PS01186">
    <property type="entry name" value="EGF_2"/>
    <property type="match status" value="4"/>
</dbReference>
<dbReference type="PROSITE" id="PS50026">
    <property type="entry name" value="EGF_3"/>
    <property type="match status" value="1"/>
</dbReference>
<dbReference type="PROSITE" id="PS50060">
    <property type="entry name" value="MAM_2"/>
    <property type="match status" value="2"/>
</dbReference>
<dbReference type="PROSITE" id="PS51233">
    <property type="entry name" value="VWFD"/>
    <property type="match status" value="4"/>
</dbReference>
<gene>
    <name type="primary">ZAN</name>
</gene>
<accession>P57999</accession>
<feature type="chain" id="PRO_0000055637" description="Zonadhesin">
    <location>
        <begin position="1" status="less than"/>
        <end position="2282"/>
    </location>
</feature>
<feature type="topological domain" description="Extracellular" evidence="3">
    <location>
        <begin position="1" status="less than"/>
        <end position="2235"/>
    </location>
</feature>
<feature type="transmembrane region" description="Helical" evidence="3">
    <location>
        <begin position="2236"/>
        <end position="2256"/>
    </location>
</feature>
<feature type="topological domain" description="Cytoplasmic" evidence="3">
    <location>
        <begin position="2257"/>
        <end position="2282"/>
    </location>
</feature>
<feature type="domain" description="MAM 1" evidence="5">
    <location>
        <begin position="1" status="less than"/>
        <end position="147"/>
    </location>
</feature>
<feature type="domain" description="MAM 2" evidence="5">
    <location>
        <begin position="150"/>
        <end position="315"/>
    </location>
</feature>
<feature type="domain" description="TIL 1">
    <location>
        <begin position="501"/>
        <end position="550"/>
    </location>
</feature>
<feature type="domain" description="VWFC 1">
    <location>
        <begin position="551"/>
        <end position="605"/>
    </location>
</feature>
<feature type="domain" description="VWFD 1" evidence="6">
    <location>
        <begin position="610"/>
        <end position="787"/>
    </location>
</feature>
<feature type="domain" description="TIL 2">
    <location>
        <begin position="881"/>
        <end position="934"/>
    </location>
</feature>
<feature type="domain" description="VWFC 2">
    <location>
        <begin position="935"/>
        <end position="990"/>
    </location>
</feature>
<feature type="domain" description="VWFD 2" evidence="6">
    <location>
        <begin position="995"/>
        <end position="1176"/>
    </location>
</feature>
<feature type="domain" description="TIL 3">
    <location>
        <begin position="1267"/>
        <end position="1322"/>
    </location>
</feature>
<feature type="domain" description="VWFC 3">
    <location>
        <begin position="1323"/>
        <end position="1379"/>
    </location>
</feature>
<feature type="domain" description="VWFD 3" evidence="6">
    <location>
        <begin position="1384"/>
        <end position="1564"/>
    </location>
</feature>
<feature type="domain" description="TIL 4">
    <location>
        <begin position="1670"/>
        <end position="1726"/>
    </location>
</feature>
<feature type="domain" description="VWFC 4">
    <location>
        <begin position="1727"/>
        <end position="1782"/>
    </location>
</feature>
<feature type="domain" description="VWFD 4" evidence="6">
    <location>
        <begin position="1787"/>
        <end position="1963"/>
    </location>
</feature>
<feature type="domain" description="TIL 5">
    <location>
        <begin position="2076"/>
        <end position="2129"/>
    </location>
</feature>
<feature type="domain" description="VWFC 5">
    <location>
        <begin position="2130"/>
        <end position="2184"/>
    </location>
</feature>
<feature type="domain" description="EGF-like" evidence="4">
    <location>
        <begin position="2185"/>
        <end position="2221"/>
    </location>
</feature>
<feature type="region of interest" description="26 X approximate heptapeptide repeats (mucin-like domain)">
    <location>
        <begin position="315"/>
        <end position="498"/>
    </location>
</feature>
<feature type="region of interest" description="Disordered" evidence="7">
    <location>
        <begin position="333"/>
        <end position="495"/>
    </location>
</feature>
<feature type="region of interest" description="Disordered" evidence="7">
    <location>
        <begin position="1561"/>
        <end position="1588"/>
    </location>
</feature>
<feature type="compositionally biased region" description="Low complexity" evidence="7">
    <location>
        <begin position="333"/>
        <end position="356"/>
    </location>
</feature>
<feature type="compositionally biased region" description="Acidic residues" evidence="7">
    <location>
        <begin position="360"/>
        <end position="369"/>
    </location>
</feature>
<feature type="compositionally biased region" description="Pro residues" evidence="7">
    <location>
        <begin position="379"/>
        <end position="398"/>
    </location>
</feature>
<feature type="compositionally biased region" description="Low complexity" evidence="7">
    <location>
        <begin position="399"/>
        <end position="420"/>
    </location>
</feature>
<feature type="compositionally biased region" description="Low complexity" evidence="7">
    <location>
        <begin position="427"/>
        <end position="495"/>
    </location>
</feature>
<feature type="compositionally biased region" description="Polar residues" evidence="7">
    <location>
        <begin position="1577"/>
        <end position="1586"/>
    </location>
</feature>
<feature type="glycosylation site" description="N-linked (GlcNAc...) asparagine" evidence="3">
    <location>
        <position position="112"/>
    </location>
</feature>
<feature type="glycosylation site" description="N-linked (GlcNAc...) asparagine" evidence="3">
    <location>
        <position position="272"/>
    </location>
</feature>
<feature type="glycosylation site" description="N-linked (GlcNAc...) asparagine" evidence="3">
    <location>
        <position position="541"/>
    </location>
</feature>
<feature type="glycosylation site" description="N-linked (GlcNAc...) asparagine" evidence="3">
    <location>
        <position position="569"/>
    </location>
</feature>
<feature type="glycosylation site" description="N-linked (GlcNAc...) asparagine" evidence="3">
    <location>
        <position position="1141"/>
    </location>
</feature>
<feature type="glycosylation site" description="N-linked (GlcNAc...) asparagine" evidence="3">
    <location>
        <position position="1259"/>
    </location>
</feature>
<feature type="glycosylation site" description="N-linked (GlcNAc...) asparagine" evidence="3">
    <location>
        <position position="1270"/>
    </location>
</feature>
<feature type="glycosylation site" description="N-linked (GlcNAc...) asparagine" evidence="3">
    <location>
        <position position="1355"/>
    </location>
</feature>
<feature type="glycosylation site" description="N-linked (GlcNAc...) asparagine" evidence="3">
    <location>
        <position position="1467"/>
    </location>
</feature>
<feature type="glycosylation site" description="N-linked (GlcNAc...) asparagine" evidence="3">
    <location>
        <position position="1483"/>
    </location>
</feature>
<feature type="glycosylation site" description="N-linked (GlcNAc...) asparagine" evidence="3">
    <location>
        <position position="1662"/>
    </location>
</feature>
<feature type="glycosylation site" description="N-linked (GlcNAc...) asparagine" evidence="3">
    <location>
        <position position="1997"/>
    </location>
</feature>
<feature type="glycosylation site" description="N-linked (GlcNAc...) asparagine" evidence="3">
    <location>
        <position position="2178"/>
    </location>
</feature>
<feature type="disulfide bond" evidence="6">
    <location>
        <begin position="612"/>
        <end position="747"/>
    </location>
</feature>
<feature type="disulfide bond" evidence="6">
    <location>
        <begin position="634"/>
        <end position="786"/>
    </location>
</feature>
<feature type="disulfide bond" evidence="6">
    <location>
        <begin position="997"/>
        <end position="1136"/>
    </location>
</feature>
<feature type="disulfide bond" evidence="6">
    <location>
        <begin position="1019"/>
        <end position="1175"/>
    </location>
</feature>
<feature type="disulfide bond" evidence="6">
    <location>
        <begin position="1386"/>
        <end position="1525"/>
    </location>
</feature>
<feature type="disulfide bond" evidence="6">
    <location>
        <begin position="1408"/>
        <end position="1563"/>
    </location>
</feature>
<feature type="disulfide bond" evidence="6">
    <location>
        <begin position="1789"/>
        <end position="1926"/>
    </location>
</feature>
<feature type="disulfide bond" evidence="1">
    <location>
        <begin position="2189"/>
        <end position="2200"/>
    </location>
</feature>
<feature type="disulfide bond" evidence="1">
    <location>
        <begin position="2194"/>
        <end position="2209"/>
    </location>
</feature>
<feature type="disulfide bond" evidence="1">
    <location>
        <begin position="2211"/>
        <end position="2220"/>
    </location>
</feature>
<feature type="non-terminal residue">
    <location>
        <position position="1"/>
    </location>
</feature>
<proteinExistence type="evidence at transcript level"/>
<name>ZAN_RABIT</name>
<keyword id="KW-0130">Cell adhesion</keyword>
<keyword id="KW-1003">Cell membrane</keyword>
<keyword id="KW-1015">Disulfide bond</keyword>
<keyword id="KW-0245">EGF-like domain</keyword>
<keyword id="KW-0325">Glycoprotein</keyword>
<keyword id="KW-0472">Membrane</keyword>
<keyword id="KW-1185">Reference proteome</keyword>
<keyword id="KW-0677">Repeat</keyword>
<keyword id="KW-0812">Transmembrane</keyword>
<keyword id="KW-1133">Transmembrane helix</keyword>
<protein>
    <recommendedName>
        <fullName>Zonadhesin</fullName>
    </recommendedName>
</protein>